<protein>
    <recommendedName>
        <fullName>Uncharacterized protein AF_0667</fullName>
    </recommendedName>
</protein>
<name>Y667_ARCFU</name>
<gene>
    <name type="ordered locus">AF_0667</name>
</gene>
<keyword id="KW-0175">Coiled coil</keyword>
<keyword id="KW-1185">Reference proteome</keyword>
<feature type="chain" id="PRO_0000127904" description="Uncharacterized protein AF_0667">
    <location>
        <begin position="1"/>
        <end position="61"/>
    </location>
</feature>
<feature type="coiled-coil region" evidence="1">
    <location>
        <begin position="24"/>
        <end position="60"/>
    </location>
</feature>
<accession>O29590</accession>
<reference key="1">
    <citation type="journal article" date="1997" name="Nature">
        <title>The complete genome sequence of the hyperthermophilic, sulphate-reducing archaeon Archaeoglobus fulgidus.</title>
        <authorList>
            <person name="Klenk H.-P."/>
            <person name="Clayton R.A."/>
            <person name="Tomb J.-F."/>
            <person name="White O."/>
            <person name="Nelson K.E."/>
            <person name="Ketchum K.A."/>
            <person name="Dodson R.J."/>
            <person name="Gwinn M.L."/>
            <person name="Hickey E.K."/>
            <person name="Peterson J.D."/>
            <person name="Richardson D.L."/>
            <person name="Kerlavage A.R."/>
            <person name="Graham D.E."/>
            <person name="Kyrpides N.C."/>
            <person name="Fleischmann R.D."/>
            <person name="Quackenbush J."/>
            <person name="Lee N.H."/>
            <person name="Sutton G.G."/>
            <person name="Gill S.R."/>
            <person name="Kirkness E.F."/>
            <person name="Dougherty B.A."/>
            <person name="McKenney K."/>
            <person name="Adams M.D."/>
            <person name="Loftus B.J."/>
            <person name="Peterson S.N."/>
            <person name="Reich C.I."/>
            <person name="McNeil L.K."/>
            <person name="Badger J.H."/>
            <person name="Glodek A."/>
            <person name="Zhou L."/>
            <person name="Overbeek R."/>
            <person name="Gocayne J.D."/>
            <person name="Weidman J.F."/>
            <person name="McDonald L.A."/>
            <person name="Utterback T.R."/>
            <person name="Cotton M.D."/>
            <person name="Spriggs T."/>
            <person name="Artiach P."/>
            <person name="Kaine B.P."/>
            <person name="Sykes S.M."/>
            <person name="Sadow P.W."/>
            <person name="D'Andrea K.P."/>
            <person name="Bowman C."/>
            <person name="Fujii C."/>
            <person name="Garland S.A."/>
            <person name="Mason T.M."/>
            <person name="Olsen G.J."/>
            <person name="Fraser C.M."/>
            <person name="Smith H.O."/>
            <person name="Woese C.R."/>
            <person name="Venter J.C."/>
        </authorList>
    </citation>
    <scope>NUCLEOTIDE SEQUENCE [LARGE SCALE GENOMIC DNA]</scope>
    <source>
        <strain>ATCC 49558 / DSM 4304 / JCM 9628 / NBRC 100126 / VC-16</strain>
    </source>
</reference>
<proteinExistence type="predicted"/>
<evidence type="ECO:0000255" key="1"/>
<dbReference type="EMBL" id="AE000782">
    <property type="protein sequence ID" value="AAB90574.1"/>
    <property type="molecule type" value="Genomic_DNA"/>
</dbReference>
<dbReference type="PIR" id="C69333">
    <property type="entry name" value="C69333"/>
</dbReference>
<dbReference type="SMR" id="O29590"/>
<dbReference type="STRING" id="224325.AF_0667"/>
<dbReference type="PaxDb" id="224325-AF_0667"/>
<dbReference type="EnsemblBacteria" id="AAB90574">
    <property type="protein sequence ID" value="AAB90574"/>
    <property type="gene ID" value="AF_0667"/>
</dbReference>
<dbReference type="KEGG" id="afu:AF_0667"/>
<dbReference type="eggNOG" id="arCOG10981">
    <property type="taxonomic scope" value="Archaea"/>
</dbReference>
<dbReference type="HOGENOM" id="CLU_2911283_0_0_2"/>
<dbReference type="Proteomes" id="UP000002199">
    <property type="component" value="Chromosome"/>
</dbReference>
<dbReference type="InterPro" id="IPR035205">
    <property type="entry name" value="DUF5320"/>
</dbReference>
<dbReference type="Pfam" id="PF17253">
    <property type="entry name" value="DUF5320"/>
    <property type="match status" value="1"/>
</dbReference>
<organism>
    <name type="scientific">Archaeoglobus fulgidus (strain ATCC 49558 / DSM 4304 / JCM 9628 / NBRC 100126 / VC-16)</name>
    <dbReference type="NCBI Taxonomy" id="224325"/>
    <lineage>
        <taxon>Archaea</taxon>
        <taxon>Methanobacteriati</taxon>
        <taxon>Methanobacteriota</taxon>
        <taxon>Archaeoglobi</taxon>
        <taxon>Archaeoglobales</taxon>
        <taxon>Archaeoglobaceae</taxon>
        <taxon>Archaeoglobus</taxon>
    </lineage>
</organism>
<sequence length="61" mass="7693">MRCMRGGWGRGWKRRCYSTGKPGWMRYESERDEKLRMLERMRDELEAELEEIKREIERLRR</sequence>